<sequence length="191" mass="20587">MAPSLHPLIDNGITPGSGSFAGGKLRCHCASDRVEVTLNSNVAHNHACGCSKCWKPSGSLFSIVGVVPRDAVSVTANASKLSVVDKEATIQRYGCKDCGVHLFGRIEKDHPFRGLDFVHVELSDEKGWQEPQFAGFVSSIIEQGSHPKEMDEVRAKFKALGLQTYDVLSPALMDLISTFTAQASGIRFANL</sequence>
<evidence type="ECO:0000255" key="1">
    <source>
        <dbReference type="HAMAP-Rule" id="MF_03142"/>
    </source>
</evidence>
<evidence type="ECO:0000255" key="2">
    <source>
        <dbReference type="PROSITE-ProRule" id="PRU01239"/>
    </source>
</evidence>
<evidence type="ECO:0000305" key="3"/>
<comment type="function">
    <text evidence="1">Catalyzes the condensation of formaldehyde and glutathione to S-hydroxymethylglutathione.</text>
</comment>
<comment type="catalytic activity">
    <reaction evidence="1">
        <text>S-(hydroxymethyl)glutathione = glutathione + formaldehyde</text>
        <dbReference type="Rhea" id="RHEA:22488"/>
        <dbReference type="ChEBI" id="CHEBI:16842"/>
        <dbReference type="ChEBI" id="CHEBI:57925"/>
        <dbReference type="ChEBI" id="CHEBI:58758"/>
        <dbReference type="EC" id="4.4.1.22"/>
    </reaction>
</comment>
<comment type="cofactor">
    <cofactor evidence="1 2">
        <name>Zn(2+)</name>
        <dbReference type="ChEBI" id="CHEBI:29105"/>
    </cofactor>
    <text evidence="1 2">Binds 2 Zn(2+) ions per subunit.</text>
</comment>
<comment type="pathway">
    <text evidence="1">One-carbon metabolism; formaldehyde degradation; formate from formaldehyde (glutathione route): step 1/3.</text>
</comment>
<comment type="similarity">
    <text evidence="3">Belongs to the Gfa family.</text>
</comment>
<name>GFA_PENRW</name>
<keyword id="KW-0456">Lyase</keyword>
<keyword id="KW-0479">Metal-binding</keyword>
<keyword id="KW-1185">Reference proteome</keyword>
<keyword id="KW-0862">Zinc</keyword>
<protein>
    <recommendedName>
        <fullName evidence="1">Putative glutathione-dependent formaldehyde-activating enzyme</fullName>
        <ecNumber evidence="1">4.4.1.22</ecNumber>
    </recommendedName>
    <alternativeName>
        <fullName evidence="1">S-(hydroxymethyl)glutathione synthase</fullName>
    </alternativeName>
</protein>
<gene>
    <name type="ORF">Pc20g15670</name>
</gene>
<proteinExistence type="inferred from homology"/>
<organism>
    <name type="scientific">Penicillium rubens (strain ATCC 28089 / DSM 1075 / NRRL 1951 / Wisconsin 54-1255)</name>
    <name type="common">Penicillium chrysogenum</name>
    <dbReference type="NCBI Taxonomy" id="500485"/>
    <lineage>
        <taxon>Eukaryota</taxon>
        <taxon>Fungi</taxon>
        <taxon>Dikarya</taxon>
        <taxon>Ascomycota</taxon>
        <taxon>Pezizomycotina</taxon>
        <taxon>Eurotiomycetes</taxon>
        <taxon>Eurotiomycetidae</taxon>
        <taxon>Eurotiales</taxon>
        <taxon>Aspergillaceae</taxon>
        <taxon>Penicillium</taxon>
        <taxon>Penicillium chrysogenum species complex</taxon>
    </lineage>
</organism>
<reference key="1">
    <citation type="journal article" date="2008" name="Nat. Biotechnol.">
        <title>Genome sequencing and analysis of the filamentous fungus Penicillium chrysogenum.</title>
        <authorList>
            <person name="van den Berg M.A."/>
            <person name="Albang R."/>
            <person name="Albermann K."/>
            <person name="Badger J.H."/>
            <person name="Daran J.-M."/>
            <person name="Driessen A.J.M."/>
            <person name="Garcia-Estrada C."/>
            <person name="Fedorova N.D."/>
            <person name="Harris D.M."/>
            <person name="Heijne W.H.M."/>
            <person name="Joardar V.S."/>
            <person name="Kiel J.A.K.W."/>
            <person name="Kovalchuk A."/>
            <person name="Martin J.F."/>
            <person name="Nierman W.C."/>
            <person name="Nijland J.G."/>
            <person name="Pronk J.T."/>
            <person name="Roubos J.A."/>
            <person name="van der Klei I.J."/>
            <person name="van Peij N.N.M.E."/>
            <person name="Veenhuis M."/>
            <person name="von Doehren H."/>
            <person name="Wagner C."/>
            <person name="Wortman J.R."/>
            <person name="Bovenberg R.A.L."/>
        </authorList>
    </citation>
    <scope>NUCLEOTIDE SEQUENCE [LARGE SCALE GENOMIC DNA]</scope>
    <source>
        <strain>ATCC 28089 / DSM 1075 / NRRL 1951 / Wisconsin 54-1255</strain>
    </source>
</reference>
<feature type="chain" id="PRO_0000406160" description="Putative glutathione-dependent formaldehyde-activating enzyme">
    <location>
        <begin position="1"/>
        <end position="191"/>
    </location>
</feature>
<feature type="domain" description="CENP-V/GFA" evidence="2">
    <location>
        <begin position="20"/>
        <end position="166"/>
    </location>
</feature>
<feature type="binding site" evidence="1 2">
    <location>
        <position position="27"/>
    </location>
    <ligand>
        <name>Zn(2+)</name>
        <dbReference type="ChEBI" id="CHEBI:29105"/>
        <label>1</label>
        <note>structural</note>
    </ligand>
</feature>
<feature type="binding site" evidence="1 2">
    <location>
        <position position="29"/>
    </location>
    <ligand>
        <name>Zn(2+)</name>
        <dbReference type="ChEBI" id="CHEBI:29105"/>
        <label>1</label>
        <note>structural</note>
    </ligand>
</feature>
<feature type="binding site" evidence="1 2">
    <location>
        <position position="48"/>
    </location>
    <ligand>
        <name>Zn(2+)</name>
        <dbReference type="ChEBI" id="CHEBI:29105"/>
        <label>2</label>
        <note>catalytic</note>
    </ligand>
</feature>
<feature type="binding site" evidence="1 2">
    <location>
        <position position="50"/>
    </location>
    <ligand>
        <name>Zn(2+)</name>
        <dbReference type="ChEBI" id="CHEBI:29105"/>
        <label>2</label>
        <note>catalytic</note>
    </ligand>
</feature>
<feature type="binding site" evidence="1 2">
    <location>
        <position position="53"/>
    </location>
    <ligand>
        <name>Zn(2+)</name>
        <dbReference type="ChEBI" id="CHEBI:29105"/>
        <label>2</label>
        <note>catalytic</note>
    </ligand>
</feature>
<feature type="binding site" evidence="1 2">
    <location>
        <position position="95"/>
    </location>
    <ligand>
        <name>Zn(2+)</name>
        <dbReference type="ChEBI" id="CHEBI:29105"/>
        <label>1</label>
        <note>structural</note>
    </ligand>
</feature>
<feature type="binding site" evidence="1 2">
    <location>
        <position position="98"/>
    </location>
    <ligand>
        <name>Zn(2+)</name>
        <dbReference type="ChEBI" id="CHEBI:29105"/>
        <label>1</label>
        <note>structural</note>
    </ligand>
</feature>
<dbReference type="EC" id="4.4.1.22" evidence="1"/>
<dbReference type="EMBL" id="AM920435">
    <property type="protein sequence ID" value="CAP86896.1"/>
    <property type="molecule type" value="Genomic_DNA"/>
</dbReference>
<dbReference type="RefSeq" id="XP_002564039.1">
    <property type="nucleotide sequence ID" value="XM_002563993.1"/>
</dbReference>
<dbReference type="SMR" id="B6HE56"/>
<dbReference type="STRING" id="500485.B6HE56"/>
<dbReference type="GeneID" id="8303824"/>
<dbReference type="KEGG" id="pcs:N7525_009934"/>
<dbReference type="VEuPathDB" id="FungiDB:PCH_Pc20g15670"/>
<dbReference type="eggNOG" id="ENOG502SKH9">
    <property type="taxonomic scope" value="Eukaryota"/>
</dbReference>
<dbReference type="HOGENOM" id="CLU_090716_0_0_1"/>
<dbReference type="OMA" id="ECGTHMY"/>
<dbReference type="OrthoDB" id="3446116at2759"/>
<dbReference type="BioCyc" id="PCHR:PC20G15670-MONOMER"/>
<dbReference type="UniPathway" id="UPA00562">
    <property type="reaction ID" value="UER00621"/>
</dbReference>
<dbReference type="Proteomes" id="UP000000724">
    <property type="component" value="Contig Pc00c20"/>
</dbReference>
<dbReference type="GO" id="GO:0051907">
    <property type="term" value="F:S-(hydroxymethyl)glutathione synthase activity"/>
    <property type="evidence" value="ECO:0007669"/>
    <property type="project" value="UniProtKB-UniRule"/>
</dbReference>
<dbReference type="GO" id="GO:0008270">
    <property type="term" value="F:zinc ion binding"/>
    <property type="evidence" value="ECO:0007669"/>
    <property type="project" value="UniProtKB-UniRule"/>
</dbReference>
<dbReference type="GO" id="GO:0046294">
    <property type="term" value="P:formaldehyde catabolic process"/>
    <property type="evidence" value="ECO:0007669"/>
    <property type="project" value="UniProtKB-UniRule"/>
</dbReference>
<dbReference type="Gene3D" id="3.90.1590.10">
    <property type="entry name" value="glutathione-dependent formaldehyde- activating enzyme (gfa)"/>
    <property type="match status" value="1"/>
</dbReference>
<dbReference type="HAMAP" id="MF_00723">
    <property type="entry name" value="Formald_GSH"/>
    <property type="match status" value="1"/>
</dbReference>
<dbReference type="InterPro" id="IPR006913">
    <property type="entry name" value="CENP-V/GFA"/>
</dbReference>
<dbReference type="InterPro" id="IPR014185">
    <property type="entry name" value="Formald_GSH"/>
</dbReference>
<dbReference type="InterPro" id="IPR011057">
    <property type="entry name" value="Mss4-like_sf"/>
</dbReference>
<dbReference type="NCBIfam" id="TIGR02820">
    <property type="entry name" value="formald_GSH"/>
    <property type="match status" value="1"/>
</dbReference>
<dbReference type="NCBIfam" id="NF003829">
    <property type="entry name" value="PRK05417.1"/>
    <property type="match status" value="1"/>
</dbReference>
<dbReference type="PANTHER" id="PTHR33337:SF40">
    <property type="entry name" value="CENP-V_GFA DOMAIN-CONTAINING PROTEIN-RELATED"/>
    <property type="match status" value="1"/>
</dbReference>
<dbReference type="PANTHER" id="PTHR33337">
    <property type="entry name" value="GFA DOMAIN-CONTAINING PROTEIN"/>
    <property type="match status" value="1"/>
</dbReference>
<dbReference type="Pfam" id="PF04828">
    <property type="entry name" value="GFA"/>
    <property type="match status" value="1"/>
</dbReference>
<dbReference type="PIRSF" id="PIRSF033318">
    <property type="entry name" value="Formald_GSH"/>
    <property type="match status" value="1"/>
</dbReference>
<dbReference type="SUPFAM" id="SSF51316">
    <property type="entry name" value="Mss4-like"/>
    <property type="match status" value="1"/>
</dbReference>
<dbReference type="PROSITE" id="PS51891">
    <property type="entry name" value="CENP_V_GFA"/>
    <property type="match status" value="1"/>
</dbReference>
<accession>B6HE56</accession>